<name>CND1_SCHPO</name>
<sequence length="1158" mass="131324">MSLDLLSRLKKYIHDEENSDLDSIYAECENAGLTAVVNDVIDTLLLGTSSCFDEDCLEKLFAICSHFADLSSSVRNKVYDLLTSNISSESAILEDMISANATDFTVPQTNLETTGIAFQLTVNSLSSSNQLSVIRSSTNTVKGRKKNPTTNSNWNGISHVNALLDAIITLFQKKLSRVWTTSSERDMFLSLFLKPIYTLMESEINIKNASFRSRLFNIIGLAVQFHNHTTAAETNIIQNLQYFEHLSEYAADLVHIVTVQFNSVTLAEGIIRTLCSLEFNDNDVKGPKQVALFLVRLSSLIPNLCLKQLTQLVKLLDSESYTLRCAIIEVLANVVIDQIHDEAQNEMSESVPATVQSLMDLLSERLLDISPYCRTKVLHVFIKIFDLPIKYPRKRQEIAELVIRCLQDRSSHVRRNAIKLFSKLLTTHPFSVMHNGLLTRNIWEKGLSIIEEQLNSLQPKQQEKVVDSELEVDENLLEDATMIQDDESHEGESHLENSLSEYVDSVPAEEIVKVNLTKRFYLEALQYIDIVEAGAKIISQLLFAKNKSEVIESMDFFVFCNSFGISSSKLYIKKMIHLIWVKGTSDEGNNIQNHVLSCYKTLFFEPPPNSGTNEAANYIARNLISLTYDASLAELTSLEQMLCILMKDGYFSHLVITKLWQVYSYQKKDISRTQRRGSIIVIGMLALGNTDVVMQGLDHLIQIGLGPPGLEDLVLARYTCIAIKRIGKDASGSSNINFPNSHTLCQKLCMLLLRPSFSEEWFGLEEQAIEAIYAVAKHPDELCTNIILLLTKQLFKPSNHENTTSNDDHAMDEDLDDSPEEETLKDEEEIGIRLAHLIFLVGHVAIKQLVYIEYCEAEFKRRKADAERLAVQNSNNPINGQETSEYDLITGTSEDDFSEAMTFIRERELLYGENSLLSRFAPLVVELCSNHKSHNNQSLLLAASLTLSKFMCLSNNFCMEHLPLLITILEKCDNPIIRNNLVIGLADLTVCFNHFIDEISEYLYRRLMDEESSVKKTCFMTLAFLILAGQIKVKGQLGIMARSLEDEDARISDLARMFFTDFAAKDNSVYNNFIDIFSVLSRSAEEQDEDDAKFKRIIRFLTSFIEKERHTKQLAERLAARLDRCKTQRQWDHVVYALSLLPHKADNIQKLIDDGYHE</sequence>
<keyword id="KW-0131">Cell cycle</keyword>
<keyword id="KW-0132">Cell division</keyword>
<keyword id="KW-0158">Chromosome</keyword>
<keyword id="KW-0963">Cytoplasm</keyword>
<keyword id="KW-0903">Direct protein sequencing</keyword>
<keyword id="KW-0226">DNA condensation</keyword>
<keyword id="KW-0498">Mitosis</keyword>
<keyword id="KW-0539">Nucleus</keyword>
<keyword id="KW-1185">Reference proteome</keyword>
<evidence type="ECO:0000256" key="1">
    <source>
        <dbReference type="SAM" id="MobiDB-lite"/>
    </source>
</evidence>
<evidence type="ECO:0000269" key="2">
    <source>
    </source>
</evidence>
<evidence type="ECO:0000305" key="3"/>
<protein>
    <recommendedName>
        <fullName>Condensin complex subunit 1</fullName>
    </recommendedName>
    <alternativeName>
        <fullName>XCAP-D2 homolog</fullName>
    </alternativeName>
    <alternativeName>
        <fullName>p128</fullName>
    </alternativeName>
</protein>
<comment type="function">
    <text>Regulatory subunit of the condensin complex, a complex required for conversion of interphase chromatin into mitotic-like condense chromosomes. The condensin complex probably introduces positive supercoils into relaxed DNA in the presence of type I topoisomerases and converts nicked DNA into positive knotted forms in the presence of type II topoisomerases. The condensin complex probably also plays a role during interphase.</text>
</comment>
<comment type="subunit">
    <text evidence="2">Component of the condensin complex, which contains the cut14/smc2 and cut3/smc2 heterodimer, and three non SMC subunits that probably regulate the complex: cnd1, cnd2 and cnd3.</text>
</comment>
<comment type="subcellular location">
    <subcellularLocation>
        <location>Nucleus</location>
    </subcellularLocation>
    <subcellularLocation>
        <location>Cytoplasm</location>
    </subcellularLocation>
    <subcellularLocation>
        <location>Chromosome</location>
    </subcellularLocation>
    <text>In interphase cells, the majority of the condensin complex is found in the cytoplasm, while a minority of the complex is associated with chromatin. A subpopulation of the complex however remains associated with chromosome foci in interphase cells. During mitosis, most of the condensin complex is associated with the chromatin. At the onset of prophase, condensin associates with chromosome arms and to chromosome condensation. Dissociation from chromosomes is observed in late telophase.</text>
</comment>
<comment type="similarity">
    <text evidence="3">Belongs to the CND1 (condensin subunit 1) family.</text>
</comment>
<gene>
    <name type="primary">cnd1</name>
    <name type="ORF">SPBC776.13</name>
</gene>
<feature type="chain" id="PRO_0000095043" description="Condensin complex subunit 1">
    <location>
        <begin position="1"/>
        <end position="1158"/>
    </location>
</feature>
<feature type="region of interest" description="Disordered" evidence="1">
    <location>
        <begin position="800"/>
        <end position="826"/>
    </location>
</feature>
<feature type="compositionally biased region" description="Acidic residues" evidence="1">
    <location>
        <begin position="810"/>
        <end position="826"/>
    </location>
</feature>
<organism>
    <name type="scientific">Schizosaccharomyces pombe (strain 972 / ATCC 24843)</name>
    <name type="common">Fission yeast</name>
    <dbReference type="NCBI Taxonomy" id="284812"/>
    <lineage>
        <taxon>Eukaryota</taxon>
        <taxon>Fungi</taxon>
        <taxon>Dikarya</taxon>
        <taxon>Ascomycota</taxon>
        <taxon>Taphrinomycotina</taxon>
        <taxon>Schizosaccharomycetes</taxon>
        <taxon>Schizosaccharomycetales</taxon>
        <taxon>Schizosaccharomycetaceae</taxon>
        <taxon>Schizosaccharomyces</taxon>
    </lineage>
</organism>
<dbReference type="EMBL" id="AB030212">
    <property type="protein sequence ID" value="BAA82624.1"/>
    <property type="molecule type" value="Genomic_DNA"/>
</dbReference>
<dbReference type="EMBL" id="CU329671">
    <property type="protein sequence ID" value="CAA22886.1"/>
    <property type="molecule type" value="Genomic_DNA"/>
</dbReference>
<dbReference type="PIR" id="T43519">
    <property type="entry name" value="T43519"/>
</dbReference>
<dbReference type="RefSeq" id="NP_596329.1">
    <property type="nucleotide sequence ID" value="NM_001022250.2"/>
</dbReference>
<dbReference type="SMR" id="O94679"/>
<dbReference type="BioGRID" id="277715">
    <property type="interactions" value="11"/>
</dbReference>
<dbReference type="DIP" id="DIP-59184N"/>
<dbReference type="FunCoup" id="O94679">
    <property type="interactions" value="340"/>
</dbReference>
<dbReference type="IntAct" id="O94679">
    <property type="interactions" value="2"/>
</dbReference>
<dbReference type="STRING" id="284812.O94679"/>
<dbReference type="iPTMnet" id="O94679"/>
<dbReference type="PaxDb" id="4896-SPBC776.13.1"/>
<dbReference type="EnsemblFungi" id="SPBC776.13.1">
    <property type="protein sequence ID" value="SPBC776.13.1:pep"/>
    <property type="gene ID" value="SPBC776.13"/>
</dbReference>
<dbReference type="GeneID" id="2541201"/>
<dbReference type="KEGG" id="spo:2541201"/>
<dbReference type="PomBase" id="SPBC776.13">
    <property type="gene designation" value="cnd1"/>
</dbReference>
<dbReference type="VEuPathDB" id="FungiDB:SPBC776.13"/>
<dbReference type="eggNOG" id="KOG0414">
    <property type="taxonomic scope" value="Eukaryota"/>
</dbReference>
<dbReference type="HOGENOM" id="CLU_001867_1_0_1"/>
<dbReference type="InParanoid" id="O94679"/>
<dbReference type="OMA" id="CPLEKLW"/>
<dbReference type="PhylomeDB" id="O94679"/>
<dbReference type="Reactome" id="R-SPO-2514853">
    <property type="pathway name" value="Condensation of Prometaphase Chromosomes"/>
</dbReference>
<dbReference type="PRO" id="PR:O94679"/>
<dbReference type="Proteomes" id="UP000002485">
    <property type="component" value="Chromosome II"/>
</dbReference>
<dbReference type="GO" id="GO:0000779">
    <property type="term" value="C:condensed chromosome, centromeric region"/>
    <property type="evidence" value="ECO:0000318"/>
    <property type="project" value="GO_Central"/>
</dbReference>
<dbReference type="GO" id="GO:0000796">
    <property type="term" value="C:condensin complex"/>
    <property type="evidence" value="ECO:0000314"/>
    <property type="project" value="PomBase"/>
</dbReference>
<dbReference type="GO" id="GO:0005737">
    <property type="term" value="C:cytoplasm"/>
    <property type="evidence" value="ECO:0000314"/>
    <property type="project" value="PomBase"/>
</dbReference>
<dbReference type="GO" id="GO:0000791">
    <property type="term" value="C:euchromatin"/>
    <property type="evidence" value="ECO:0000314"/>
    <property type="project" value="PomBase"/>
</dbReference>
<dbReference type="GO" id="GO:0000776">
    <property type="term" value="C:kinetochore"/>
    <property type="evidence" value="ECO:0000314"/>
    <property type="project" value="PomBase"/>
</dbReference>
<dbReference type="GO" id="GO:0140602">
    <property type="term" value="C:nucleolar peripheral inclusion body"/>
    <property type="evidence" value="ECO:0000314"/>
    <property type="project" value="PomBase"/>
</dbReference>
<dbReference type="GO" id="GO:0005730">
    <property type="term" value="C:nucleolus"/>
    <property type="evidence" value="ECO:0000314"/>
    <property type="project" value="PomBase"/>
</dbReference>
<dbReference type="GO" id="GO:0005634">
    <property type="term" value="C:nucleus"/>
    <property type="evidence" value="ECO:0000314"/>
    <property type="project" value="PomBase"/>
</dbReference>
<dbReference type="GO" id="GO:0003690">
    <property type="term" value="F:double-stranded DNA binding"/>
    <property type="evidence" value="ECO:0000269"/>
    <property type="project" value="PomBase"/>
</dbReference>
<dbReference type="GO" id="GO:0042393">
    <property type="term" value="F:histone binding"/>
    <property type="evidence" value="ECO:0000318"/>
    <property type="project" value="GO_Central"/>
</dbReference>
<dbReference type="GO" id="GO:0051301">
    <property type="term" value="P:cell division"/>
    <property type="evidence" value="ECO:0007669"/>
    <property type="project" value="UniProtKB-KW"/>
</dbReference>
<dbReference type="GO" id="GO:0010032">
    <property type="term" value="P:meiotic chromosome condensation"/>
    <property type="evidence" value="ECO:0000318"/>
    <property type="project" value="GO_Central"/>
</dbReference>
<dbReference type="GO" id="GO:0007076">
    <property type="term" value="P:mitotic chromosome condensation"/>
    <property type="evidence" value="ECO:0000315"/>
    <property type="project" value="PomBase"/>
</dbReference>
<dbReference type="Gene3D" id="1.25.10.10">
    <property type="entry name" value="Leucine-rich Repeat Variant"/>
    <property type="match status" value="1"/>
</dbReference>
<dbReference type="InterPro" id="IPR011989">
    <property type="entry name" value="ARM-like"/>
</dbReference>
<dbReference type="InterPro" id="IPR016024">
    <property type="entry name" value="ARM-type_fold"/>
</dbReference>
<dbReference type="InterPro" id="IPR026971">
    <property type="entry name" value="CND1/NCAPD3"/>
</dbReference>
<dbReference type="InterPro" id="IPR032682">
    <property type="entry name" value="Cnd1_C"/>
</dbReference>
<dbReference type="InterPro" id="IPR007673">
    <property type="entry name" value="Condensin_cplx_su1"/>
</dbReference>
<dbReference type="InterPro" id="IPR024324">
    <property type="entry name" value="Condensin_cplx_su1_N"/>
</dbReference>
<dbReference type="PANTHER" id="PTHR14222">
    <property type="entry name" value="CONDENSIN"/>
    <property type="match status" value="1"/>
</dbReference>
<dbReference type="PANTHER" id="PTHR14222:SF2">
    <property type="entry name" value="CONDENSIN COMPLEX SUBUNIT 1"/>
    <property type="match status" value="1"/>
</dbReference>
<dbReference type="Pfam" id="PF12717">
    <property type="entry name" value="Cnd1"/>
    <property type="match status" value="1"/>
</dbReference>
<dbReference type="Pfam" id="PF12922">
    <property type="entry name" value="Cnd1_N"/>
    <property type="match status" value="1"/>
</dbReference>
<dbReference type="PIRSF" id="PIRSF017127">
    <property type="entry name" value="Condensin_D2"/>
    <property type="match status" value="1"/>
</dbReference>
<dbReference type="SUPFAM" id="SSF48371">
    <property type="entry name" value="ARM repeat"/>
    <property type="match status" value="1"/>
</dbReference>
<accession>O94679</accession>
<reference key="1">
    <citation type="journal article" date="1999" name="Genes Dev.">
        <title>Fission yeast condensin complex: essential roles of non-SMC subunits for condensation and Cdc2 phosphorylation of Cut3/SMC4.</title>
        <authorList>
            <person name="Sutani T."/>
            <person name="Yuasa T."/>
            <person name="Tomonaga T."/>
            <person name="Dohmae N."/>
            <person name="Takio K."/>
            <person name="Yanagida M."/>
        </authorList>
    </citation>
    <scope>NUCLEOTIDE SEQUENCE [GENOMIC DNA]</scope>
    <scope>PROTEIN SEQUENCE OF 518-536; 658-667 AND 1126-1138</scope>
    <scope>IDENTIFICATION IN A CONDENSIN COMPLEX WITH CUT3; CUT14; CND2 AND CND3</scope>
</reference>
<reference key="2">
    <citation type="journal article" date="2002" name="Nature">
        <title>The genome sequence of Schizosaccharomyces pombe.</title>
        <authorList>
            <person name="Wood V."/>
            <person name="Gwilliam R."/>
            <person name="Rajandream M.A."/>
            <person name="Lyne M.H."/>
            <person name="Lyne R."/>
            <person name="Stewart A."/>
            <person name="Sgouros J.G."/>
            <person name="Peat N."/>
            <person name="Hayles J."/>
            <person name="Baker S.G."/>
            <person name="Basham D."/>
            <person name="Bowman S."/>
            <person name="Brooks K."/>
            <person name="Brown D."/>
            <person name="Brown S."/>
            <person name="Chillingworth T."/>
            <person name="Churcher C.M."/>
            <person name="Collins M."/>
            <person name="Connor R."/>
            <person name="Cronin A."/>
            <person name="Davis P."/>
            <person name="Feltwell T."/>
            <person name="Fraser A."/>
            <person name="Gentles S."/>
            <person name="Goble A."/>
            <person name="Hamlin N."/>
            <person name="Harris D.E."/>
            <person name="Hidalgo J."/>
            <person name="Hodgson G."/>
            <person name="Holroyd S."/>
            <person name="Hornsby T."/>
            <person name="Howarth S."/>
            <person name="Huckle E.J."/>
            <person name="Hunt S."/>
            <person name="Jagels K."/>
            <person name="James K.D."/>
            <person name="Jones L."/>
            <person name="Jones M."/>
            <person name="Leather S."/>
            <person name="McDonald S."/>
            <person name="McLean J."/>
            <person name="Mooney P."/>
            <person name="Moule S."/>
            <person name="Mungall K.L."/>
            <person name="Murphy L.D."/>
            <person name="Niblett D."/>
            <person name="Odell C."/>
            <person name="Oliver K."/>
            <person name="O'Neil S."/>
            <person name="Pearson D."/>
            <person name="Quail M.A."/>
            <person name="Rabbinowitsch E."/>
            <person name="Rutherford K.M."/>
            <person name="Rutter S."/>
            <person name="Saunders D."/>
            <person name="Seeger K."/>
            <person name="Sharp S."/>
            <person name="Skelton J."/>
            <person name="Simmonds M.N."/>
            <person name="Squares R."/>
            <person name="Squares S."/>
            <person name="Stevens K."/>
            <person name="Taylor K."/>
            <person name="Taylor R.G."/>
            <person name="Tivey A."/>
            <person name="Walsh S.V."/>
            <person name="Warren T."/>
            <person name="Whitehead S."/>
            <person name="Woodward J.R."/>
            <person name="Volckaert G."/>
            <person name="Aert R."/>
            <person name="Robben J."/>
            <person name="Grymonprez B."/>
            <person name="Weltjens I."/>
            <person name="Vanstreels E."/>
            <person name="Rieger M."/>
            <person name="Schaefer M."/>
            <person name="Mueller-Auer S."/>
            <person name="Gabel C."/>
            <person name="Fuchs M."/>
            <person name="Duesterhoeft A."/>
            <person name="Fritzc C."/>
            <person name="Holzer E."/>
            <person name="Moestl D."/>
            <person name="Hilbert H."/>
            <person name="Borzym K."/>
            <person name="Langer I."/>
            <person name="Beck A."/>
            <person name="Lehrach H."/>
            <person name="Reinhardt R."/>
            <person name="Pohl T.M."/>
            <person name="Eger P."/>
            <person name="Zimmermann W."/>
            <person name="Wedler H."/>
            <person name="Wambutt R."/>
            <person name="Purnelle B."/>
            <person name="Goffeau A."/>
            <person name="Cadieu E."/>
            <person name="Dreano S."/>
            <person name="Gloux S."/>
            <person name="Lelaure V."/>
            <person name="Mottier S."/>
            <person name="Galibert F."/>
            <person name="Aves S.J."/>
            <person name="Xiang Z."/>
            <person name="Hunt C."/>
            <person name="Moore K."/>
            <person name="Hurst S.M."/>
            <person name="Lucas M."/>
            <person name="Rochet M."/>
            <person name="Gaillardin C."/>
            <person name="Tallada V.A."/>
            <person name="Garzon A."/>
            <person name="Thode G."/>
            <person name="Daga R.R."/>
            <person name="Cruzado L."/>
            <person name="Jimenez J."/>
            <person name="Sanchez M."/>
            <person name="del Rey F."/>
            <person name="Benito J."/>
            <person name="Dominguez A."/>
            <person name="Revuelta J.L."/>
            <person name="Moreno S."/>
            <person name="Armstrong J."/>
            <person name="Forsburg S.L."/>
            <person name="Cerutti L."/>
            <person name="Lowe T."/>
            <person name="McCombie W.R."/>
            <person name="Paulsen I."/>
            <person name="Potashkin J."/>
            <person name="Shpakovski G.V."/>
            <person name="Ussery D."/>
            <person name="Barrell B.G."/>
            <person name="Nurse P."/>
        </authorList>
    </citation>
    <scope>NUCLEOTIDE SEQUENCE [LARGE SCALE GENOMIC DNA]</scope>
    <source>
        <strain>972 / ATCC 24843</strain>
    </source>
</reference>
<proteinExistence type="evidence at protein level"/>